<keyword id="KW-0328">Glycosyltransferase</keyword>
<keyword id="KW-0808">Transferase</keyword>
<protein>
    <recommendedName>
        <fullName evidence="1">Pyrimidine/purine nucleoside phosphorylase</fullName>
        <ecNumber evidence="1">2.4.2.1</ecNumber>
        <ecNumber evidence="1">2.4.2.2</ecNumber>
    </recommendedName>
    <alternativeName>
        <fullName evidence="1">Adenosine phosphorylase</fullName>
    </alternativeName>
    <alternativeName>
        <fullName evidence="1">Cytidine phosphorylase</fullName>
    </alternativeName>
    <alternativeName>
        <fullName evidence="1">Guanosine phosphorylase</fullName>
    </alternativeName>
    <alternativeName>
        <fullName evidence="1">Inosine phosphorylase</fullName>
    </alternativeName>
    <alternativeName>
        <fullName evidence="1">Thymidine phosphorylase</fullName>
    </alternativeName>
    <alternativeName>
        <fullName evidence="1">Uridine phosphorylase</fullName>
    </alternativeName>
    <alternativeName>
        <fullName evidence="1">Xanthosine phosphorylase</fullName>
    </alternativeName>
</protein>
<dbReference type="EC" id="2.4.2.1" evidence="1"/>
<dbReference type="EC" id="2.4.2.2" evidence="1"/>
<dbReference type="EMBL" id="CP000949">
    <property type="protein sequence ID" value="ACA74049.1"/>
    <property type="molecule type" value="Genomic_DNA"/>
</dbReference>
<dbReference type="SMR" id="B1JBX3"/>
<dbReference type="STRING" id="390235.PputW619_3567"/>
<dbReference type="KEGG" id="ppw:PputW619_3567"/>
<dbReference type="eggNOG" id="COG3123">
    <property type="taxonomic scope" value="Bacteria"/>
</dbReference>
<dbReference type="HOGENOM" id="CLU_157874_0_0_6"/>
<dbReference type="OrthoDB" id="9793848at2"/>
<dbReference type="GO" id="GO:0005829">
    <property type="term" value="C:cytosol"/>
    <property type="evidence" value="ECO:0007669"/>
    <property type="project" value="TreeGrafter"/>
</dbReference>
<dbReference type="GO" id="GO:0047975">
    <property type="term" value="F:guanosine phosphorylase activity"/>
    <property type="evidence" value="ECO:0007669"/>
    <property type="project" value="UniProtKB-EC"/>
</dbReference>
<dbReference type="GO" id="GO:0004731">
    <property type="term" value="F:purine-nucleoside phosphorylase activity"/>
    <property type="evidence" value="ECO:0007669"/>
    <property type="project" value="UniProtKB-UniRule"/>
</dbReference>
<dbReference type="GO" id="GO:0009032">
    <property type="term" value="F:thymidine phosphorylase activity"/>
    <property type="evidence" value="ECO:0007669"/>
    <property type="project" value="UniProtKB-EC"/>
</dbReference>
<dbReference type="GO" id="GO:0004850">
    <property type="term" value="F:uridine phosphorylase activity"/>
    <property type="evidence" value="ECO:0007669"/>
    <property type="project" value="UniProtKB-EC"/>
</dbReference>
<dbReference type="CDD" id="cd20296">
    <property type="entry name" value="cupin_PpnP-like"/>
    <property type="match status" value="1"/>
</dbReference>
<dbReference type="FunFam" id="2.60.120.10:FF:000016">
    <property type="entry name" value="Pyrimidine/purine nucleoside phosphorylase"/>
    <property type="match status" value="1"/>
</dbReference>
<dbReference type="Gene3D" id="2.60.120.10">
    <property type="entry name" value="Jelly Rolls"/>
    <property type="match status" value="1"/>
</dbReference>
<dbReference type="HAMAP" id="MF_01537">
    <property type="entry name" value="Nucleos_phosphorylase_PpnP"/>
    <property type="match status" value="1"/>
</dbReference>
<dbReference type="InterPro" id="IPR009664">
    <property type="entry name" value="Ppnp"/>
</dbReference>
<dbReference type="InterPro" id="IPR014710">
    <property type="entry name" value="RmlC-like_jellyroll"/>
</dbReference>
<dbReference type="InterPro" id="IPR011051">
    <property type="entry name" value="RmlC_Cupin_sf"/>
</dbReference>
<dbReference type="PANTHER" id="PTHR36540">
    <property type="entry name" value="PYRIMIDINE/PURINE NUCLEOSIDE PHOSPHORYLASE"/>
    <property type="match status" value="1"/>
</dbReference>
<dbReference type="PANTHER" id="PTHR36540:SF1">
    <property type="entry name" value="PYRIMIDINE_PURINE NUCLEOSIDE PHOSPHORYLASE"/>
    <property type="match status" value="1"/>
</dbReference>
<dbReference type="Pfam" id="PF06865">
    <property type="entry name" value="Ppnp"/>
    <property type="match status" value="1"/>
</dbReference>
<dbReference type="SUPFAM" id="SSF51182">
    <property type="entry name" value="RmlC-like cupins"/>
    <property type="match status" value="1"/>
</dbReference>
<organism>
    <name type="scientific">Pseudomonas putida (strain W619)</name>
    <dbReference type="NCBI Taxonomy" id="390235"/>
    <lineage>
        <taxon>Bacteria</taxon>
        <taxon>Pseudomonadati</taxon>
        <taxon>Pseudomonadota</taxon>
        <taxon>Gammaproteobacteria</taxon>
        <taxon>Pseudomonadales</taxon>
        <taxon>Pseudomonadaceae</taxon>
        <taxon>Pseudomonas</taxon>
    </lineage>
</organism>
<name>PPNP_PSEPW</name>
<sequence>MFKVNEYFDGTVKSIAFEGTEGPATVGVMAPGEYEFGTAKREIMHVVSGALTVKLPGSDNWETFNAGDKFNVAADSKFQLKVAVDTAYLCEYRD</sequence>
<proteinExistence type="inferred from homology"/>
<evidence type="ECO:0000255" key="1">
    <source>
        <dbReference type="HAMAP-Rule" id="MF_01537"/>
    </source>
</evidence>
<accession>B1JBX3</accession>
<feature type="chain" id="PRO_1000198671" description="Pyrimidine/purine nucleoside phosphorylase">
    <location>
        <begin position="1"/>
        <end position="94"/>
    </location>
</feature>
<gene>
    <name evidence="1" type="primary">ppnP</name>
    <name type="ordered locus">PputW619_3567</name>
</gene>
<comment type="function">
    <text evidence="1">Catalyzes the phosphorolysis of diverse nucleosides, yielding D-ribose 1-phosphate and the respective free bases. Can use uridine, adenosine, guanosine, cytidine, thymidine, inosine and xanthosine as substrates. Also catalyzes the reverse reactions.</text>
</comment>
<comment type="catalytic activity">
    <reaction evidence="1">
        <text>a purine D-ribonucleoside + phosphate = a purine nucleobase + alpha-D-ribose 1-phosphate</text>
        <dbReference type="Rhea" id="RHEA:19805"/>
        <dbReference type="ChEBI" id="CHEBI:26386"/>
        <dbReference type="ChEBI" id="CHEBI:43474"/>
        <dbReference type="ChEBI" id="CHEBI:57720"/>
        <dbReference type="ChEBI" id="CHEBI:142355"/>
        <dbReference type="EC" id="2.4.2.1"/>
    </reaction>
</comment>
<comment type="catalytic activity">
    <reaction evidence="1">
        <text>adenosine + phosphate = alpha-D-ribose 1-phosphate + adenine</text>
        <dbReference type="Rhea" id="RHEA:27642"/>
        <dbReference type="ChEBI" id="CHEBI:16335"/>
        <dbReference type="ChEBI" id="CHEBI:16708"/>
        <dbReference type="ChEBI" id="CHEBI:43474"/>
        <dbReference type="ChEBI" id="CHEBI:57720"/>
        <dbReference type="EC" id="2.4.2.1"/>
    </reaction>
</comment>
<comment type="catalytic activity">
    <reaction evidence="1">
        <text>cytidine + phosphate = cytosine + alpha-D-ribose 1-phosphate</text>
        <dbReference type="Rhea" id="RHEA:52540"/>
        <dbReference type="ChEBI" id="CHEBI:16040"/>
        <dbReference type="ChEBI" id="CHEBI:17562"/>
        <dbReference type="ChEBI" id="CHEBI:43474"/>
        <dbReference type="ChEBI" id="CHEBI:57720"/>
        <dbReference type="EC" id="2.4.2.2"/>
    </reaction>
</comment>
<comment type="catalytic activity">
    <reaction evidence="1">
        <text>guanosine + phosphate = alpha-D-ribose 1-phosphate + guanine</text>
        <dbReference type="Rhea" id="RHEA:13233"/>
        <dbReference type="ChEBI" id="CHEBI:16235"/>
        <dbReference type="ChEBI" id="CHEBI:16750"/>
        <dbReference type="ChEBI" id="CHEBI:43474"/>
        <dbReference type="ChEBI" id="CHEBI:57720"/>
        <dbReference type="EC" id="2.4.2.1"/>
    </reaction>
</comment>
<comment type="catalytic activity">
    <reaction evidence="1">
        <text>inosine + phosphate = alpha-D-ribose 1-phosphate + hypoxanthine</text>
        <dbReference type="Rhea" id="RHEA:27646"/>
        <dbReference type="ChEBI" id="CHEBI:17368"/>
        <dbReference type="ChEBI" id="CHEBI:17596"/>
        <dbReference type="ChEBI" id="CHEBI:43474"/>
        <dbReference type="ChEBI" id="CHEBI:57720"/>
        <dbReference type="EC" id="2.4.2.1"/>
    </reaction>
</comment>
<comment type="catalytic activity">
    <reaction evidence="1">
        <text>thymidine + phosphate = 2-deoxy-alpha-D-ribose 1-phosphate + thymine</text>
        <dbReference type="Rhea" id="RHEA:16037"/>
        <dbReference type="ChEBI" id="CHEBI:17748"/>
        <dbReference type="ChEBI" id="CHEBI:17821"/>
        <dbReference type="ChEBI" id="CHEBI:43474"/>
        <dbReference type="ChEBI" id="CHEBI:57259"/>
        <dbReference type="EC" id="2.4.2.2"/>
    </reaction>
</comment>
<comment type="catalytic activity">
    <reaction evidence="1">
        <text>uridine + phosphate = alpha-D-ribose 1-phosphate + uracil</text>
        <dbReference type="Rhea" id="RHEA:24388"/>
        <dbReference type="ChEBI" id="CHEBI:16704"/>
        <dbReference type="ChEBI" id="CHEBI:17568"/>
        <dbReference type="ChEBI" id="CHEBI:43474"/>
        <dbReference type="ChEBI" id="CHEBI:57720"/>
        <dbReference type="EC" id="2.4.2.2"/>
    </reaction>
</comment>
<comment type="catalytic activity">
    <reaction evidence="1">
        <text>xanthosine + phosphate = alpha-D-ribose 1-phosphate + xanthine</text>
        <dbReference type="Rhea" id="RHEA:27638"/>
        <dbReference type="ChEBI" id="CHEBI:17712"/>
        <dbReference type="ChEBI" id="CHEBI:18107"/>
        <dbReference type="ChEBI" id="CHEBI:43474"/>
        <dbReference type="ChEBI" id="CHEBI:57720"/>
        <dbReference type="EC" id="2.4.2.1"/>
    </reaction>
</comment>
<comment type="similarity">
    <text evidence="1">Belongs to the nucleoside phosphorylase PpnP family.</text>
</comment>
<reference key="1">
    <citation type="submission" date="2008-02" db="EMBL/GenBank/DDBJ databases">
        <title>Complete sequence of Pseudomonas putida W619.</title>
        <authorList>
            <person name="Copeland A."/>
            <person name="Lucas S."/>
            <person name="Lapidus A."/>
            <person name="Barry K."/>
            <person name="Detter J.C."/>
            <person name="Glavina del Rio T."/>
            <person name="Dalin E."/>
            <person name="Tice H."/>
            <person name="Pitluck S."/>
            <person name="Chain P."/>
            <person name="Malfatti S."/>
            <person name="Shin M."/>
            <person name="Vergez L."/>
            <person name="Schmutz J."/>
            <person name="Larimer F."/>
            <person name="Land M."/>
            <person name="Hauser L."/>
            <person name="Kyrpides N."/>
            <person name="Kim E."/>
            <person name="Taghavi S."/>
            <person name="Vangronsveld D."/>
            <person name="van der Lelie D."/>
            <person name="Richardson P."/>
        </authorList>
    </citation>
    <scope>NUCLEOTIDE SEQUENCE [LARGE SCALE GENOMIC DNA]</scope>
    <source>
        <strain>W619</strain>
    </source>
</reference>